<comment type="function">
    <text evidence="1">IGPS catalyzes the conversion of PRFAR and glutamine to IGP, AICAR and glutamate. The HisH subunit catalyzes the hydrolysis of glutamine to glutamate and ammonia as part of the synthesis of IGP and AICAR. The resulting ammonia molecule is channeled to the active site of HisF.</text>
</comment>
<comment type="catalytic activity">
    <reaction evidence="1">
        <text>5-[(5-phospho-1-deoxy-D-ribulos-1-ylimino)methylamino]-1-(5-phospho-beta-D-ribosyl)imidazole-4-carboxamide + L-glutamine = D-erythro-1-(imidazol-4-yl)glycerol 3-phosphate + 5-amino-1-(5-phospho-beta-D-ribosyl)imidazole-4-carboxamide + L-glutamate + H(+)</text>
        <dbReference type="Rhea" id="RHEA:24793"/>
        <dbReference type="ChEBI" id="CHEBI:15378"/>
        <dbReference type="ChEBI" id="CHEBI:29985"/>
        <dbReference type="ChEBI" id="CHEBI:58278"/>
        <dbReference type="ChEBI" id="CHEBI:58359"/>
        <dbReference type="ChEBI" id="CHEBI:58475"/>
        <dbReference type="ChEBI" id="CHEBI:58525"/>
        <dbReference type="EC" id="4.3.2.10"/>
    </reaction>
</comment>
<comment type="catalytic activity">
    <reaction evidence="1">
        <text>L-glutamine + H2O = L-glutamate + NH4(+)</text>
        <dbReference type="Rhea" id="RHEA:15889"/>
        <dbReference type="ChEBI" id="CHEBI:15377"/>
        <dbReference type="ChEBI" id="CHEBI:28938"/>
        <dbReference type="ChEBI" id="CHEBI:29985"/>
        <dbReference type="ChEBI" id="CHEBI:58359"/>
        <dbReference type="EC" id="3.5.1.2"/>
    </reaction>
</comment>
<comment type="pathway">
    <text evidence="1">Amino-acid biosynthesis; L-histidine biosynthesis; L-histidine from 5-phospho-alpha-D-ribose 1-diphosphate: step 5/9.</text>
</comment>
<comment type="subunit">
    <text evidence="1">Heterodimer of HisH and HisF.</text>
</comment>
<comment type="subcellular location">
    <subcellularLocation>
        <location evidence="1">Cytoplasm</location>
    </subcellularLocation>
</comment>
<dbReference type="EC" id="4.3.2.10" evidence="1"/>
<dbReference type="EC" id="3.5.1.2" evidence="1"/>
<dbReference type="EMBL" id="AE017261">
    <property type="protein sequence ID" value="AAT43919.1"/>
    <property type="molecule type" value="Genomic_DNA"/>
</dbReference>
<dbReference type="SMR" id="Q6KZD3"/>
<dbReference type="FunCoup" id="Q6KZD3">
    <property type="interactions" value="73"/>
</dbReference>
<dbReference type="STRING" id="263820.PTO1334"/>
<dbReference type="PaxDb" id="263820-PTO1334"/>
<dbReference type="KEGG" id="pto:PTO1334"/>
<dbReference type="PATRIC" id="fig|263820.9.peg.1385"/>
<dbReference type="eggNOG" id="arCOG00089">
    <property type="taxonomic scope" value="Archaea"/>
</dbReference>
<dbReference type="HOGENOM" id="CLU_071837_0_0_2"/>
<dbReference type="InParanoid" id="Q6KZD3"/>
<dbReference type="OrthoDB" id="33401at2157"/>
<dbReference type="UniPathway" id="UPA00031">
    <property type="reaction ID" value="UER00010"/>
</dbReference>
<dbReference type="Proteomes" id="UP000000438">
    <property type="component" value="Chromosome"/>
</dbReference>
<dbReference type="GO" id="GO:0005737">
    <property type="term" value="C:cytoplasm"/>
    <property type="evidence" value="ECO:0007669"/>
    <property type="project" value="UniProtKB-SubCell"/>
</dbReference>
<dbReference type="GO" id="GO:0004359">
    <property type="term" value="F:glutaminase activity"/>
    <property type="evidence" value="ECO:0007669"/>
    <property type="project" value="UniProtKB-EC"/>
</dbReference>
<dbReference type="GO" id="GO:0000107">
    <property type="term" value="F:imidazoleglycerol-phosphate synthase activity"/>
    <property type="evidence" value="ECO:0007669"/>
    <property type="project" value="UniProtKB-UniRule"/>
</dbReference>
<dbReference type="GO" id="GO:0016829">
    <property type="term" value="F:lyase activity"/>
    <property type="evidence" value="ECO:0007669"/>
    <property type="project" value="UniProtKB-KW"/>
</dbReference>
<dbReference type="GO" id="GO:0000105">
    <property type="term" value="P:L-histidine biosynthetic process"/>
    <property type="evidence" value="ECO:0007669"/>
    <property type="project" value="UniProtKB-UniRule"/>
</dbReference>
<dbReference type="CDD" id="cd01748">
    <property type="entry name" value="GATase1_IGP_Synthase"/>
    <property type="match status" value="1"/>
</dbReference>
<dbReference type="Gene3D" id="3.40.50.880">
    <property type="match status" value="1"/>
</dbReference>
<dbReference type="HAMAP" id="MF_00278">
    <property type="entry name" value="HisH"/>
    <property type="match status" value="1"/>
</dbReference>
<dbReference type="InterPro" id="IPR029062">
    <property type="entry name" value="Class_I_gatase-like"/>
</dbReference>
<dbReference type="InterPro" id="IPR017926">
    <property type="entry name" value="GATASE"/>
</dbReference>
<dbReference type="InterPro" id="IPR010139">
    <property type="entry name" value="Imidazole-glycPsynth_HisH"/>
</dbReference>
<dbReference type="NCBIfam" id="TIGR01855">
    <property type="entry name" value="IMP_synth_hisH"/>
    <property type="match status" value="1"/>
</dbReference>
<dbReference type="PANTHER" id="PTHR42701">
    <property type="entry name" value="IMIDAZOLE GLYCEROL PHOSPHATE SYNTHASE SUBUNIT HISH"/>
    <property type="match status" value="1"/>
</dbReference>
<dbReference type="PANTHER" id="PTHR42701:SF1">
    <property type="entry name" value="IMIDAZOLE GLYCEROL PHOSPHATE SYNTHASE SUBUNIT HISH"/>
    <property type="match status" value="1"/>
</dbReference>
<dbReference type="Pfam" id="PF00117">
    <property type="entry name" value="GATase"/>
    <property type="match status" value="1"/>
</dbReference>
<dbReference type="PIRSF" id="PIRSF000495">
    <property type="entry name" value="Amidotransf_hisH"/>
    <property type="match status" value="1"/>
</dbReference>
<dbReference type="SUPFAM" id="SSF52317">
    <property type="entry name" value="Class I glutamine amidotransferase-like"/>
    <property type="match status" value="1"/>
</dbReference>
<dbReference type="PROSITE" id="PS51273">
    <property type="entry name" value="GATASE_TYPE_1"/>
    <property type="match status" value="1"/>
</dbReference>
<sequence length="186" mass="20693">MIAIIDYGSGNLASVEKALHGVVTSDPYKIDMADKIVFPGAGSFSAAVSGIKNIRDIIIEKIRNGTPYLGICLGLEILFSESEEGPGTGLSFFNERLKRFKKGIHMGWNTVEFNDNIIFSGIKKGEYFYFVHRYYAPLGSYTCGKTFFNGYFTSFININNIYAVQFHPEKSGEPGLKLLRNFGELA</sequence>
<evidence type="ECO:0000255" key="1">
    <source>
        <dbReference type="HAMAP-Rule" id="MF_00278"/>
    </source>
</evidence>
<organism>
    <name type="scientific">Picrophilus torridus (strain ATCC 700027 / DSM 9790 / JCM 10055 / NBRC 100828 / KAW 2/3)</name>
    <dbReference type="NCBI Taxonomy" id="1122961"/>
    <lineage>
        <taxon>Archaea</taxon>
        <taxon>Methanobacteriati</taxon>
        <taxon>Thermoplasmatota</taxon>
        <taxon>Thermoplasmata</taxon>
        <taxon>Thermoplasmatales</taxon>
        <taxon>Picrophilaceae</taxon>
        <taxon>Picrophilus</taxon>
    </lineage>
</organism>
<proteinExistence type="inferred from homology"/>
<protein>
    <recommendedName>
        <fullName evidence="1">Imidazole glycerol phosphate synthase subunit HisH</fullName>
        <ecNumber evidence="1">4.3.2.10</ecNumber>
    </recommendedName>
    <alternativeName>
        <fullName evidence="1">IGP synthase glutaminase subunit</fullName>
        <ecNumber evidence="1">3.5.1.2</ecNumber>
    </alternativeName>
    <alternativeName>
        <fullName evidence="1">IGP synthase subunit HisH</fullName>
    </alternativeName>
    <alternativeName>
        <fullName evidence="1">ImGP synthase subunit HisH</fullName>
        <shortName evidence="1">IGPS subunit HisH</shortName>
    </alternativeName>
</protein>
<name>HIS5_PICTO</name>
<feature type="chain" id="PRO_0000152464" description="Imidazole glycerol phosphate synthase subunit HisH">
    <location>
        <begin position="1"/>
        <end position="186"/>
    </location>
</feature>
<feature type="domain" description="Glutamine amidotransferase type-1" evidence="1">
    <location>
        <begin position="1"/>
        <end position="186"/>
    </location>
</feature>
<feature type="active site" description="Nucleophile" evidence="1">
    <location>
        <position position="72"/>
    </location>
</feature>
<feature type="active site" evidence="1">
    <location>
        <position position="167"/>
    </location>
</feature>
<feature type="active site" evidence="1">
    <location>
        <position position="169"/>
    </location>
</feature>
<reference key="1">
    <citation type="journal article" date="2004" name="Proc. Natl. Acad. Sci. U.S.A.">
        <title>Genome sequence of Picrophilus torridus and its implications for life around pH 0.</title>
        <authorList>
            <person name="Fuetterer O."/>
            <person name="Angelov A."/>
            <person name="Liesegang H."/>
            <person name="Gottschalk G."/>
            <person name="Schleper C."/>
            <person name="Schepers B."/>
            <person name="Dock C."/>
            <person name="Antranikian G."/>
            <person name="Liebl W."/>
        </authorList>
    </citation>
    <scope>NUCLEOTIDE SEQUENCE [LARGE SCALE GENOMIC DNA]</scope>
    <source>
        <strain>ATCC 700027 / DSM 9790 / JCM 10055 / NBRC 100828 / KAW 2/3</strain>
    </source>
</reference>
<keyword id="KW-0028">Amino-acid biosynthesis</keyword>
<keyword id="KW-0963">Cytoplasm</keyword>
<keyword id="KW-0315">Glutamine amidotransferase</keyword>
<keyword id="KW-0368">Histidine biosynthesis</keyword>
<keyword id="KW-0378">Hydrolase</keyword>
<keyword id="KW-0456">Lyase</keyword>
<gene>
    <name evidence="1" type="primary">hisH</name>
    <name type="ordered locus">PTO1334</name>
</gene>
<accession>Q6KZD3</accession>